<evidence type="ECO:0000255" key="1">
    <source>
        <dbReference type="HAMAP-Rule" id="MF_00741"/>
    </source>
</evidence>
<sequence>MAESYKQSGVDIHAGYEAVERMKKHVNKTMRKEVLGGLGSFGAAFDLSQLNMKAPVLVSGTDGVGTKLRLAIDSDRHDTIGIDAVAMCVNDILTTGAMPLYFLDYLALNKVDPVIVEQIVKGVADGCAESECALIGGETAEMGDMYHTGDYDIAGFAVGAVEKDAYITGERIAEGDVILGLASSGIHSNGYSLVRKIIKDNNLDLDAEFDNGKTLLDVVLEPTRLYVKSAKAILDAADVHGMCHVTGGGFIENVPRVFVTDGLYPEIDVTNIPRQKIFDLLQEKGSIDKMEMYNIFNMGIGFIFIVPREAVEKVRSAVNEEVFEIGRVVRGDKAIDIKGV</sequence>
<gene>
    <name evidence="1" type="primary">purM</name>
    <name type="ordered locus">MCCL_0694</name>
</gene>
<proteinExistence type="inferred from homology"/>
<name>PUR5_MACCJ</name>
<feature type="chain" id="PRO_1000148285" description="Phosphoribosylformylglycinamidine cyclo-ligase">
    <location>
        <begin position="1"/>
        <end position="340"/>
    </location>
</feature>
<comment type="catalytic activity">
    <reaction evidence="1">
        <text>2-formamido-N(1)-(5-O-phospho-beta-D-ribosyl)acetamidine + ATP = 5-amino-1-(5-phospho-beta-D-ribosyl)imidazole + ADP + phosphate + H(+)</text>
        <dbReference type="Rhea" id="RHEA:23032"/>
        <dbReference type="ChEBI" id="CHEBI:15378"/>
        <dbReference type="ChEBI" id="CHEBI:30616"/>
        <dbReference type="ChEBI" id="CHEBI:43474"/>
        <dbReference type="ChEBI" id="CHEBI:137981"/>
        <dbReference type="ChEBI" id="CHEBI:147287"/>
        <dbReference type="ChEBI" id="CHEBI:456216"/>
        <dbReference type="EC" id="6.3.3.1"/>
    </reaction>
</comment>
<comment type="pathway">
    <text evidence="1">Purine metabolism; IMP biosynthesis via de novo pathway; 5-amino-1-(5-phospho-D-ribosyl)imidazole from N(2)-formyl-N(1)-(5-phospho-D-ribosyl)glycinamide: step 2/2.</text>
</comment>
<comment type="subcellular location">
    <subcellularLocation>
        <location evidence="1">Cytoplasm</location>
    </subcellularLocation>
</comment>
<comment type="similarity">
    <text evidence="1">Belongs to the AIR synthase family.</text>
</comment>
<accession>B9EAZ0</accession>
<organism>
    <name type="scientific">Macrococcus caseolyticus (strain JCSC5402)</name>
    <name type="common">Macrococcoides caseolyticum</name>
    <dbReference type="NCBI Taxonomy" id="458233"/>
    <lineage>
        <taxon>Bacteria</taxon>
        <taxon>Bacillati</taxon>
        <taxon>Bacillota</taxon>
        <taxon>Bacilli</taxon>
        <taxon>Bacillales</taxon>
        <taxon>Staphylococcaceae</taxon>
        <taxon>Macrococcoides</taxon>
    </lineage>
</organism>
<reference key="1">
    <citation type="journal article" date="2009" name="J. Bacteriol.">
        <title>Complete genome sequence of Macrococcus caseolyticus strain JCSCS5402, reflecting the ancestral genome of the human-pathogenic staphylococci.</title>
        <authorList>
            <person name="Baba T."/>
            <person name="Kuwahara-Arai K."/>
            <person name="Uchiyama I."/>
            <person name="Takeuchi F."/>
            <person name="Ito T."/>
            <person name="Hiramatsu K."/>
        </authorList>
    </citation>
    <scope>NUCLEOTIDE SEQUENCE [LARGE SCALE GENOMIC DNA]</scope>
    <source>
        <strain>JCSC5402</strain>
    </source>
</reference>
<dbReference type="EC" id="6.3.3.1" evidence="1"/>
<dbReference type="EMBL" id="AP009484">
    <property type="protein sequence ID" value="BAH17401.1"/>
    <property type="molecule type" value="Genomic_DNA"/>
</dbReference>
<dbReference type="RefSeq" id="WP_012656602.1">
    <property type="nucleotide sequence ID" value="NC_011999.1"/>
</dbReference>
<dbReference type="SMR" id="B9EAZ0"/>
<dbReference type="STRING" id="458233.MCCL_0694"/>
<dbReference type="KEGG" id="mcl:MCCL_0694"/>
<dbReference type="eggNOG" id="COG0150">
    <property type="taxonomic scope" value="Bacteria"/>
</dbReference>
<dbReference type="HOGENOM" id="CLU_047116_0_0_9"/>
<dbReference type="OrthoDB" id="9802507at2"/>
<dbReference type="UniPathway" id="UPA00074">
    <property type="reaction ID" value="UER00129"/>
</dbReference>
<dbReference type="Proteomes" id="UP000001383">
    <property type="component" value="Chromosome"/>
</dbReference>
<dbReference type="GO" id="GO:0005829">
    <property type="term" value="C:cytosol"/>
    <property type="evidence" value="ECO:0007669"/>
    <property type="project" value="TreeGrafter"/>
</dbReference>
<dbReference type="GO" id="GO:0005524">
    <property type="term" value="F:ATP binding"/>
    <property type="evidence" value="ECO:0007669"/>
    <property type="project" value="UniProtKB-KW"/>
</dbReference>
<dbReference type="GO" id="GO:0004637">
    <property type="term" value="F:phosphoribosylamine-glycine ligase activity"/>
    <property type="evidence" value="ECO:0007669"/>
    <property type="project" value="TreeGrafter"/>
</dbReference>
<dbReference type="GO" id="GO:0004641">
    <property type="term" value="F:phosphoribosylformylglycinamidine cyclo-ligase activity"/>
    <property type="evidence" value="ECO:0007669"/>
    <property type="project" value="UniProtKB-UniRule"/>
</dbReference>
<dbReference type="GO" id="GO:0006189">
    <property type="term" value="P:'de novo' IMP biosynthetic process"/>
    <property type="evidence" value="ECO:0007669"/>
    <property type="project" value="UniProtKB-UniRule"/>
</dbReference>
<dbReference type="GO" id="GO:0046084">
    <property type="term" value="P:adenine biosynthetic process"/>
    <property type="evidence" value="ECO:0007669"/>
    <property type="project" value="TreeGrafter"/>
</dbReference>
<dbReference type="CDD" id="cd02196">
    <property type="entry name" value="PurM"/>
    <property type="match status" value="1"/>
</dbReference>
<dbReference type="FunFam" id="3.30.1330.10:FF:000001">
    <property type="entry name" value="Phosphoribosylformylglycinamidine cyclo-ligase"/>
    <property type="match status" value="1"/>
</dbReference>
<dbReference type="FunFam" id="3.90.650.10:FF:000011">
    <property type="entry name" value="Phosphoribosylformylglycinamidine cyclo-ligase"/>
    <property type="match status" value="1"/>
</dbReference>
<dbReference type="Gene3D" id="3.90.650.10">
    <property type="entry name" value="PurM-like C-terminal domain"/>
    <property type="match status" value="1"/>
</dbReference>
<dbReference type="Gene3D" id="3.30.1330.10">
    <property type="entry name" value="PurM-like, N-terminal domain"/>
    <property type="match status" value="1"/>
</dbReference>
<dbReference type="HAMAP" id="MF_00741">
    <property type="entry name" value="AIRS"/>
    <property type="match status" value="1"/>
</dbReference>
<dbReference type="InterPro" id="IPR010918">
    <property type="entry name" value="PurM-like_C_dom"/>
</dbReference>
<dbReference type="InterPro" id="IPR036676">
    <property type="entry name" value="PurM-like_C_sf"/>
</dbReference>
<dbReference type="InterPro" id="IPR016188">
    <property type="entry name" value="PurM-like_N"/>
</dbReference>
<dbReference type="InterPro" id="IPR036921">
    <property type="entry name" value="PurM-like_N_sf"/>
</dbReference>
<dbReference type="InterPro" id="IPR004733">
    <property type="entry name" value="PurM_cligase"/>
</dbReference>
<dbReference type="NCBIfam" id="TIGR00878">
    <property type="entry name" value="purM"/>
    <property type="match status" value="1"/>
</dbReference>
<dbReference type="PANTHER" id="PTHR10520:SF12">
    <property type="entry name" value="TRIFUNCTIONAL PURINE BIOSYNTHETIC PROTEIN ADENOSINE-3"/>
    <property type="match status" value="1"/>
</dbReference>
<dbReference type="PANTHER" id="PTHR10520">
    <property type="entry name" value="TRIFUNCTIONAL PURINE BIOSYNTHETIC PROTEIN ADENOSINE-3-RELATED"/>
    <property type="match status" value="1"/>
</dbReference>
<dbReference type="Pfam" id="PF00586">
    <property type="entry name" value="AIRS"/>
    <property type="match status" value="1"/>
</dbReference>
<dbReference type="Pfam" id="PF02769">
    <property type="entry name" value="AIRS_C"/>
    <property type="match status" value="1"/>
</dbReference>
<dbReference type="SUPFAM" id="SSF56042">
    <property type="entry name" value="PurM C-terminal domain-like"/>
    <property type="match status" value="1"/>
</dbReference>
<dbReference type="SUPFAM" id="SSF55326">
    <property type="entry name" value="PurM N-terminal domain-like"/>
    <property type="match status" value="1"/>
</dbReference>
<keyword id="KW-0067">ATP-binding</keyword>
<keyword id="KW-0963">Cytoplasm</keyword>
<keyword id="KW-0436">Ligase</keyword>
<keyword id="KW-0547">Nucleotide-binding</keyword>
<keyword id="KW-0658">Purine biosynthesis</keyword>
<keyword id="KW-1185">Reference proteome</keyword>
<protein>
    <recommendedName>
        <fullName evidence="1">Phosphoribosylformylglycinamidine cyclo-ligase</fullName>
        <ecNumber evidence="1">6.3.3.1</ecNumber>
    </recommendedName>
    <alternativeName>
        <fullName evidence="1">AIR synthase</fullName>
    </alternativeName>
    <alternativeName>
        <fullName evidence="1">AIRS</fullName>
    </alternativeName>
    <alternativeName>
        <fullName evidence="1">Phosphoribosyl-aminoimidazole synthetase</fullName>
    </alternativeName>
</protein>